<keyword id="KW-0408">Iron</keyword>
<keyword id="KW-0479">Metal-binding</keyword>
<proteinExistence type="inferred from homology"/>
<name>CYAY_BURP1</name>
<accession>Q3JMV4</accession>
<comment type="function">
    <text evidence="1">Involved in iron-sulfur (Fe-S) cluster assembly. May act as a regulator of Fe-S biogenesis.</text>
</comment>
<comment type="similarity">
    <text evidence="1">Belongs to the frataxin family.</text>
</comment>
<organism>
    <name type="scientific">Burkholderia pseudomallei (strain 1710b)</name>
    <dbReference type="NCBI Taxonomy" id="320372"/>
    <lineage>
        <taxon>Bacteria</taxon>
        <taxon>Pseudomonadati</taxon>
        <taxon>Pseudomonadota</taxon>
        <taxon>Betaproteobacteria</taxon>
        <taxon>Burkholderiales</taxon>
        <taxon>Burkholderiaceae</taxon>
        <taxon>Burkholderia</taxon>
        <taxon>pseudomallei group</taxon>
    </lineage>
</organism>
<evidence type="ECO:0000255" key="1">
    <source>
        <dbReference type="HAMAP-Rule" id="MF_00142"/>
    </source>
</evidence>
<feature type="chain" id="PRO_1000010919" description="Iron-sulfur cluster assembly protein CyaY">
    <location>
        <begin position="1"/>
        <end position="108"/>
    </location>
</feature>
<reference key="1">
    <citation type="journal article" date="2010" name="Genome Biol. Evol.">
        <title>Continuing evolution of Burkholderia mallei through genome reduction and large-scale rearrangements.</title>
        <authorList>
            <person name="Losada L."/>
            <person name="Ronning C.M."/>
            <person name="DeShazer D."/>
            <person name="Woods D."/>
            <person name="Fedorova N."/>
            <person name="Kim H.S."/>
            <person name="Shabalina S.A."/>
            <person name="Pearson T.R."/>
            <person name="Brinkac L."/>
            <person name="Tan P."/>
            <person name="Nandi T."/>
            <person name="Crabtree J."/>
            <person name="Badger J."/>
            <person name="Beckstrom-Sternberg S."/>
            <person name="Saqib M."/>
            <person name="Schutzer S.E."/>
            <person name="Keim P."/>
            <person name="Nierman W.C."/>
        </authorList>
    </citation>
    <scope>NUCLEOTIDE SEQUENCE [LARGE SCALE GENOMIC DNA]</scope>
    <source>
        <strain>1710b</strain>
    </source>
</reference>
<gene>
    <name evidence="1" type="primary">cyaY</name>
    <name type="ordered locus">BURPS1710b_3735</name>
</gene>
<sequence>MSDTDYLTRAEAVLAAVERSVDAANDGDADIDLERNGSVLTLTFENGSKIIVNLQPPMKEVWIAAKAGGFHYRFVDGAWRDTRSGDEFFAALTGYATQQAGMPIAFSA</sequence>
<dbReference type="EMBL" id="CP000124">
    <property type="protein sequence ID" value="ABA48150.1"/>
    <property type="molecule type" value="Genomic_DNA"/>
</dbReference>
<dbReference type="RefSeq" id="WP_004196764.1">
    <property type="nucleotide sequence ID" value="NC_007434.1"/>
</dbReference>
<dbReference type="SMR" id="Q3JMV4"/>
<dbReference type="EnsemblBacteria" id="ABA48150">
    <property type="protein sequence ID" value="ABA48150"/>
    <property type="gene ID" value="BURPS1710b_3735"/>
</dbReference>
<dbReference type="GeneID" id="93061793"/>
<dbReference type="KEGG" id="bpm:BURPS1710b_3735"/>
<dbReference type="HOGENOM" id="CLU_080880_3_0_4"/>
<dbReference type="Proteomes" id="UP000002700">
    <property type="component" value="Chromosome I"/>
</dbReference>
<dbReference type="GO" id="GO:0005829">
    <property type="term" value="C:cytosol"/>
    <property type="evidence" value="ECO:0007669"/>
    <property type="project" value="TreeGrafter"/>
</dbReference>
<dbReference type="GO" id="GO:0008199">
    <property type="term" value="F:ferric iron binding"/>
    <property type="evidence" value="ECO:0007669"/>
    <property type="project" value="InterPro"/>
</dbReference>
<dbReference type="GO" id="GO:0008198">
    <property type="term" value="F:ferrous iron binding"/>
    <property type="evidence" value="ECO:0007669"/>
    <property type="project" value="TreeGrafter"/>
</dbReference>
<dbReference type="GO" id="GO:0016226">
    <property type="term" value="P:iron-sulfur cluster assembly"/>
    <property type="evidence" value="ECO:0007669"/>
    <property type="project" value="UniProtKB-UniRule"/>
</dbReference>
<dbReference type="CDD" id="cd00503">
    <property type="entry name" value="Frataxin"/>
    <property type="match status" value="1"/>
</dbReference>
<dbReference type="Gene3D" id="3.30.920.10">
    <property type="entry name" value="Frataxin/CyaY"/>
    <property type="match status" value="1"/>
</dbReference>
<dbReference type="HAMAP" id="MF_00142">
    <property type="entry name" value="CyaY"/>
    <property type="match status" value="1"/>
</dbReference>
<dbReference type="InterPro" id="IPR047584">
    <property type="entry name" value="CyaY"/>
</dbReference>
<dbReference type="InterPro" id="IPR002908">
    <property type="entry name" value="Frataxin/CyaY"/>
</dbReference>
<dbReference type="InterPro" id="IPR036524">
    <property type="entry name" value="Frataxin/CyaY_sf"/>
</dbReference>
<dbReference type="InterPro" id="IPR020895">
    <property type="entry name" value="Frataxin_CS"/>
</dbReference>
<dbReference type="NCBIfam" id="TIGR03421">
    <property type="entry name" value="FeS_CyaY"/>
    <property type="match status" value="1"/>
</dbReference>
<dbReference type="PANTHER" id="PTHR16821">
    <property type="entry name" value="FRATAXIN"/>
    <property type="match status" value="1"/>
</dbReference>
<dbReference type="PANTHER" id="PTHR16821:SF2">
    <property type="entry name" value="FRATAXIN, MITOCHONDRIAL"/>
    <property type="match status" value="1"/>
</dbReference>
<dbReference type="Pfam" id="PF01491">
    <property type="entry name" value="Frataxin_Cyay"/>
    <property type="match status" value="1"/>
</dbReference>
<dbReference type="SMART" id="SM01219">
    <property type="entry name" value="Frataxin_Cyay"/>
    <property type="match status" value="1"/>
</dbReference>
<dbReference type="SUPFAM" id="SSF55387">
    <property type="entry name" value="Frataxin/Nqo15-like"/>
    <property type="match status" value="1"/>
</dbReference>
<dbReference type="PROSITE" id="PS01344">
    <property type="entry name" value="FRATAXIN_1"/>
    <property type="match status" value="1"/>
</dbReference>
<dbReference type="PROSITE" id="PS50810">
    <property type="entry name" value="FRATAXIN_2"/>
    <property type="match status" value="1"/>
</dbReference>
<protein>
    <recommendedName>
        <fullName evidence="1">Iron-sulfur cluster assembly protein CyaY</fullName>
    </recommendedName>
</protein>